<proteinExistence type="evidence at protein level"/>
<accession>Q9P804</accession>
<accession>O74566</accession>
<comment type="function">
    <text evidence="5 6">Dimethylates a single guanine residue at position 26 of nuclear- and mitochondrial-encoded tRNAs using S-adenosyl-L-methionine as donor of the methyl groups (PubMed:10611485, PubMed:37805140). Also has tRNA strand annealing and dissociation activity independently of its tRNA guanine-dimethyltransferase activity (PubMed:37805140).</text>
</comment>
<comment type="catalytic activity">
    <reaction evidence="3 6">
        <text>guanosine(26) in tRNA + 2 S-adenosyl-L-methionine = N(2)-dimethylguanosine(26) in tRNA + 2 S-adenosyl-L-homocysteine + 2 H(+)</text>
        <dbReference type="Rhea" id="RHEA:43140"/>
        <dbReference type="Rhea" id="RHEA-COMP:10359"/>
        <dbReference type="Rhea" id="RHEA-COMP:10360"/>
        <dbReference type="ChEBI" id="CHEBI:15378"/>
        <dbReference type="ChEBI" id="CHEBI:57856"/>
        <dbReference type="ChEBI" id="CHEBI:59789"/>
        <dbReference type="ChEBI" id="CHEBI:74269"/>
        <dbReference type="ChEBI" id="CHEBI:74513"/>
        <dbReference type="EC" id="2.1.1.216"/>
    </reaction>
</comment>
<comment type="subcellular location">
    <molecule>Isoform 1</molecule>
    <subcellularLocation>
        <location evidence="6">Mitochondrion</location>
    </subcellularLocation>
</comment>
<comment type="subcellular location">
    <molecule>Isoform 2</molecule>
    <subcellularLocation>
        <location evidence="6">Nucleus</location>
    </subcellularLocation>
    <subcellularLocation>
        <location evidence="6">Cytoplasm</location>
    </subcellularLocation>
</comment>
<comment type="alternative products">
    <event type="alternative promoter"/>
    <isoform>
        <id>Q9P804-1</id>
        <name>1</name>
        <name evidence="7">M1</name>
        <sequence type="displayed"/>
    </isoform>
    <isoform>
        <id>Q9P804-2</id>
        <name>2</name>
        <name evidence="7">M24</name>
        <sequence type="described" ref="VSP_062552"/>
    </isoform>
</comment>
<comment type="similarity">
    <text evidence="3">Belongs to the class I-like SAM-binding methyltransferase superfamily. Trm1 family.</text>
</comment>
<reference key="1">
    <citation type="journal article" date="1999" name="FEBS Lett.">
        <title>The tRNA N2,N2-dimethylguanosine-26 methyltransferase encoded by gene trm1 increases efficiency of suppression of an ochre codon in Schizosaccharomyces pombe.</title>
        <authorList>
            <person name="Niederberger C."/>
            <person name="Graub R."/>
            <person name="Costa A."/>
            <person name="Desgres J."/>
            <person name="Schweingruber M.E."/>
        </authorList>
    </citation>
    <scope>NUCLEOTIDE SEQUENCE [GENOMIC DNA]</scope>
    <scope>FUNCTION</scope>
</reference>
<reference key="2">
    <citation type="journal article" date="2002" name="Nature">
        <title>The genome sequence of Schizosaccharomyces pombe.</title>
        <authorList>
            <person name="Wood V."/>
            <person name="Gwilliam R."/>
            <person name="Rajandream M.A."/>
            <person name="Lyne M.H."/>
            <person name="Lyne R."/>
            <person name="Stewart A."/>
            <person name="Sgouros J.G."/>
            <person name="Peat N."/>
            <person name="Hayles J."/>
            <person name="Baker S.G."/>
            <person name="Basham D."/>
            <person name="Bowman S."/>
            <person name="Brooks K."/>
            <person name="Brown D."/>
            <person name="Brown S."/>
            <person name="Chillingworth T."/>
            <person name="Churcher C.M."/>
            <person name="Collins M."/>
            <person name="Connor R."/>
            <person name="Cronin A."/>
            <person name="Davis P."/>
            <person name="Feltwell T."/>
            <person name="Fraser A."/>
            <person name="Gentles S."/>
            <person name="Goble A."/>
            <person name="Hamlin N."/>
            <person name="Harris D.E."/>
            <person name="Hidalgo J."/>
            <person name="Hodgson G."/>
            <person name="Holroyd S."/>
            <person name="Hornsby T."/>
            <person name="Howarth S."/>
            <person name="Huckle E.J."/>
            <person name="Hunt S."/>
            <person name="Jagels K."/>
            <person name="James K.D."/>
            <person name="Jones L."/>
            <person name="Jones M."/>
            <person name="Leather S."/>
            <person name="McDonald S."/>
            <person name="McLean J."/>
            <person name="Mooney P."/>
            <person name="Moule S."/>
            <person name="Mungall K.L."/>
            <person name="Murphy L.D."/>
            <person name="Niblett D."/>
            <person name="Odell C."/>
            <person name="Oliver K."/>
            <person name="O'Neil S."/>
            <person name="Pearson D."/>
            <person name="Quail M.A."/>
            <person name="Rabbinowitsch E."/>
            <person name="Rutherford K.M."/>
            <person name="Rutter S."/>
            <person name="Saunders D."/>
            <person name="Seeger K."/>
            <person name="Sharp S."/>
            <person name="Skelton J."/>
            <person name="Simmonds M.N."/>
            <person name="Squares R."/>
            <person name="Squares S."/>
            <person name="Stevens K."/>
            <person name="Taylor K."/>
            <person name="Taylor R.G."/>
            <person name="Tivey A."/>
            <person name="Walsh S.V."/>
            <person name="Warren T."/>
            <person name="Whitehead S."/>
            <person name="Woodward J.R."/>
            <person name="Volckaert G."/>
            <person name="Aert R."/>
            <person name="Robben J."/>
            <person name="Grymonprez B."/>
            <person name="Weltjens I."/>
            <person name="Vanstreels E."/>
            <person name="Rieger M."/>
            <person name="Schaefer M."/>
            <person name="Mueller-Auer S."/>
            <person name="Gabel C."/>
            <person name="Fuchs M."/>
            <person name="Duesterhoeft A."/>
            <person name="Fritzc C."/>
            <person name="Holzer E."/>
            <person name="Moestl D."/>
            <person name="Hilbert H."/>
            <person name="Borzym K."/>
            <person name="Langer I."/>
            <person name="Beck A."/>
            <person name="Lehrach H."/>
            <person name="Reinhardt R."/>
            <person name="Pohl T.M."/>
            <person name="Eger P."/>
            <person name="Zimmermann W."/>
            <person name="Wedler H."/>
            <person name="Wambutt R."/>
            <person name="Purnelle B."/>
            <person name="Goffeau A."/>
            <person name="Cadieu E."/>
            <person name="Dreano S."/>
            <person name="Gloux S."/>
            <person name="Lelaure V."/>
            <person name="Mottier S."/>
            <person name="Galibert F."/>
            <person name="Aves S.J."/>
            <person name="Xiang Z."/>
            <person name="Hunt C."/>
            <person name="Moore K."/>
            <person name="Hurst S.M."/>
            <person name="Lucas M."/>
            <person name="Rochet M."/>
            <person name="Gaillardin C."/>
            <person name="Tallada V.A."/>
            <person name="Garzon A."/>
            <person name="Thode G."/>
            <person name="Daga R.R."/>
            <person name="Cruzado L."/>
            <person name="Jimenez J."/>
            <person name="Sanchez M."/>
            <person name="del Rey F."/>
            <person name="Benito J."/>
            <person name="Dominguez A."/>
            <person name="Revuelta J.L."/>
            <person name="Moreno S."/>
            <person name="Armstrong J."/>
            <person name="Forsburg S.L."/>
            <person name="Cerutti L."/>
            <person name="Lowe T."/>
            <person name="McCombie W.R."/>
            <person name="Paulsen I."/>
            <person name="Potashkin J."/>
            <person name="Shpakovski G.V."/>
            <person name="Ussery D."/>
            <person name="Barrell B.G."/>
            <person name="Nurse P."/>
        </authorList>
    </citation>
    <scope>NUCLEOTIDE SEQUENCE [LARGE SCALE GENOMIC DNA]</scope>
    <source>
        <strain>972 / ATCC 24843</strain>
    </source>
</reference>
<reference key="3">
    <citation type="journal article" date="2023" name="J. Biol. Chem.">
        <title>Crosstalk between the tRNA methyltransferase Trm1 and RNA chaperone La influences eukaryotic tRNA maturation.</title>
        <authorList>
            <person name="Porat J."/>
            <person name="Vakiloroayaei A."/>
            <person name="Remnant B.M."/>
            <person name="Talebi M."/>
            <person name="Cargill T."/>
            <person name="Bayfield M.A."/>
        </authorList>
    </citation>
    <scope>FUNCTION</scope>
    <scope>CATALYTIC ACTIVITY</scope>
    <scope>ALTERNATIVE SPLICING</scope>
    <scope>SUBCELLULAR LOCATION (ISOFORMS 1 AND 2)</scope>
    <scope>MUTAGENESIS OF ASP-201</scope>
</reference>
<gene>
    <name evidence="7" type="primary">trm1</name>
    <name type="ORF">SPBC25D12.05</name>
</gene>
<keyword id="KW-0877">Alternative promoter usage</keyword>
<keyword id="KW-0963">Cytoplasm</keyword>
<keyword id="KW-0479">Metal-binding</keyword>
<keyword id="KW-0489">Methyltransferase</keyword>
<keyword id="KW-0496">Mitochondrion</keyword>
<keyword id="KW-0539">Nucleus</keyword>
<keyword id="KW-1185">Reference proteome</keyword>
<keyword id="KW-0694">RNA-binding</keyword>
<keyword id="KW-0949">S-adenosyl-L-methionine</keyword>
<keyword id="KW-0808">Transferase</keyword>
<keyword id="KW-0809">Transit peptide</keyword>
<keyword id="KW-0819">tRNA processing</keyword>
<keyword id="KW-0820">tRNA-binding</keyword>
<keyword id="KW-0862">Zinc</keyword>
<protein>
    <recommendedName>
        <fullName>tRNA (guanine(26)-N(2))-dimethyltransferase</fullName>
        <ecNumber evidence="6">2.1.1.216</ecNumber>
    </recommendedName>
    <alternativeName>
        <fullName>tRNA 2,2-dimethylguanosine-26 methyltransferase</fullName>
    </alternativeName>
    <alternativeName>
        <fullName>tRNA(guanine-26,N(2)-N(2)) methyltransferase</fullName>
    </alternativeName>
    <alternativeName>
        <fullName>tRNA(m(2,2)G26)dimethyltransferase</fullName>
    </alternativeName>
</protein>
<sequence>MYEANMLRLSQRISNAVNHFSTAMMSGASASLTEGSAIIPFSNPNEVFYNPVQQFNRDLSVTAIRAWSETRSKKIVAKSHHRHQLLDQNSELSQENLTKCDTTHDFEKNCSEKTDSTSADNIAGFTILEALSATGLRSIRYAKELPNVKRILANDLLENAVKTIEKNVNYNNVSDIVIPNKGDANAVMHMNKFHYDVIDLDPYGSAAPFLDAAVQSVSKDGLLCITCTDSAVLAGNAYPEKCFSNYGGSSLRSNFCHEQAVRHLLYAIAASAAKYGRAIKPLLSLSIDFYFRVFVQIKAKPVLVKNLQSQSLLIYHCSGCGSFAEQPLGKTSPGRLPGTTKFSNASGPPVSANCEHCGYVHHVGGPLWGGPLHDAEFLKKMRAIAEDLDPEVYGTKRRILGMLALADEELPDVPFYFVLSQICSVLRSQSPPQNIFVSALLNAGYRVSGSHAKSNAIKTNAPWSFVWDVLRSWIKDHPVKLENISKTSAGAAILEKTPTAEVDFTFRPDSEFASKKEGYTRYQMNPTENWGPKSKPGKRTIAEVDSKS</sequence>
<evidence type="ECO:0000250" key="1">
    <source>
        <dbReference type="UniProtKB" id="O67010"/>
    </source>
</evidence>
<evidence type="ECO:0000255" key="2"/>
<evidence type="ECO:0000255" key="3">
    <source>
        <dbReference type="PROSITE-ProRule" id="PRU00958"/>
    </source>
</evidence>
<evidence type="ECO:0000256" key="4">
    <source>
        <dbReference type="SAM" id="MobiDB-lite"/>
    </source>
</evidence>
<evidence type="ECO:0000269" key="5">
    <source>
    </source>
</evidence>
<evidence type="ECO:0000269" key="6">
    <source>
    </source>
</evidence>
<evidence type="ECO:0000303" key="7">
    <source>
    </source>
</evidence>
<evidence type="ECO:0000305" key="8"/>
<organism>
    <name type="scientific">Schizosaccharomyces pombe (strain 972 / ATCC 24843)</name>
    <name type="common">Fission yeast</name>
    <dbReference type="NCBI Taxonomy" id="284812"/>
    <lineage>
        <taxon>Eukaryota</taxon>
        <taxon>Fungi</taxon>
        <taxon>Dikarya</taxon>
        <taxon>Ascomycota</taxon>
        <taxon>Taphrinomycotina</taxon>
        <taxon>Schizosaccharomycetes</taxon>
        <taxon>Schizosaccharomycetales</taxon>
        <taxon>Schizosaccharomycetaceae</taxon>
        <taxon>Schizosaccharomyces</taxon>
    </lineage>
</organism>
<dbReference type="EC" id="2.1.1.216" evidence="6"/>
<dbReference type="EMBL" id="AJ224000">
    <property type="protein sequence ID" value="CAA11801.1"/>
    <property type="molecule type" value="Genomic_DNA"/>
</dbReference>
<dbReference type="EMBL" id="CU329671">
    <property type="protein sequence ID" value="CAA20101.2"/>
    <property type="molecule type" value="Genomic_DNA"/>
</dbReference>
<dbReference type="PIR" id="T39993">
    <property type="entry name" value="T39993"/>
</dbReference>
<dbReference type="PIR" id="T46565">
    <property type="entry name" value="T46565"/>
</dbReference>
<dbReference type="RefSeq" id="NP_596547.1">
    <property type="nucleotide sequence ID" value="NM_001022468.2"/>
</dbReference>
<dbReference type="SMR" id="Q9P804"/>
<dbReference type="BioGRID" id="277130">
    <property type="interactions" value="13"/>
</dbReference>
<dbReference type="FunCoup" id="Q9P804">
    <property type="interactions" value="1081"/>
</dbReference>
<dbReference type="STRING" id="284812.Q9P804"/>
<dbReference type="PaxDb" id="4896-SPBC25D12.05.1"/>
<dbReference type="EnsemblFungi" id="SPBC25D12.05.1">
    <property type="protein sequence ID" value="SPBC25D12.05.1:pep"/>
    <property type="gene ID" value="SPBC25D12.05"/>
</dbReference>
<dbReference type="GeneID" id="2540604"/>
<dbReference type="KEGG" id="spo:2540604"/>
<dbReference type="PomBase" id="SPBC25D12.05">
    <property type="gene designation" value="trm1"/>
</dbReference>
<dbReference type="VEuPathDB" id="FungiDB:SPBC25D12.05"/>
<dbReference type="eggNOG" id="KOG1253">
    <property type="taxonomic scope" value="Eukaryota"/>
</dbReference>
<dbReference type="HOGENOM" id="CLU_010862_4_1_1"/>
<dbReference type="InParanoid" id="Q9P804"/>
<dbReference type="OMA" id="MKCCHEM"/>
<dbReference type="PhylomeDB" id="Q9P804"/>
<dbReference type="BRENDA" id="2.1.1.216">
    <property type="organism ID" value="5613"/>
</dbReference>
<dbReference type="PRO" id="PR:Q9P804"/>
<dbReference type="Proteomes" id="UP000002485">
    <property type="component" value="Chromosome II"/>
</dbReference>
<dbReference type="GO" id="GO:0005739">
    <property type="term" value="C:mitochondrion"/>
    <property type="evidence" value="ECO:0007005"/>
    <property type="project" value="PomBase"/>
</dbReference>
<dbReference type="GO" id="GO:0034399">
    <property type="term" value="C:nuclear periphery"/>
    <property type="evidence" value="ECO:0000266"/>
    <property type="project" value="PomBase"/>
</dbReference>
<dbReference type="GO" id="GO:0005634">
    <property type="term" value="C:nucleus"/>
    <property type="evidence" value="ECO:0007005"/>
    <property type="project" value="PomBase"/>
</dbReference>
<dbReference type="GO" id="GO:0140691">
    <property type="term" value="F:RNA folding chaperone"/>
    <property type="evidence" value="ECO:0000314"/>
    <property type="project" value="PomBase"/>
</dbReference>
<dbReference type="GO" id="GO:0160104">
    <property type="term" value="F:tRNA (guanine(26)-N2)-dimethyltransferase activity"/>
    <property type="evidence" value="ECO:0000314"/>
    <property type="project" value="PomBase"/>
</dbReference>
<dbReference type="GO" id="GO:0000049">
    <property type="term" value="F:tRNA binding"/>
    <property type="evidence" value="ECO:0007669"/>
    <property type="project" value="UniProtKB-KW"/>
</dbReference>
<dbReference type="GO" id="GO:0002940">
    <property type="term" value="P:tRNA N2-guanine methylation"/>
    <property type="evidence" value="ECO:0000315"/>
    <property type="project" value="PomBase"/>
</dbReference>
<dbReference type="GO" id="GO:0008033">
    <property type="term" value="P:tRNA processing"/>
    <property type="evidence" value="ECO:0000269"/>
    <property type="project" value="PomBase"/>
</dbReference>
<dbReference type="CDD" id="cd02440">
    <property type="entry name" value="AdoMet_MTases"/>
    <property type="match status" value="1"/>
</dbReference>
<dbReference type="FunFam" id="3.30.56.70:FF:000001">
    <property type="entry name" value="tRNA (guanine(26)-N(2))-dimethyltransferase"/>
    <property type="match status" value="1"/>
</dbReference>
<dbReference type="Gene3D" id="3.30.56.70">
    <property type="entry name" value="N2,N2-dimethylguanosine tRNA methyltransferase, C-terminal domain"/>
    <property type="match status" value="1"/>
</dbReference>
<dbReference type="Gene3D" id="3.40.50.150">
    <property type="entry name" value="Vaccinia Virus protein VP39"/>
    <property type="match status" value="1"/>
</dbReference>
<dbReference type="InterPro" id="IPR029063">
    <property type="entry name" value="SAM-dependent_MTases_sf"/>
</dbReference>
<dbReference type="InterPro" id="IPR002905">
    <property type="entry name" value="Trm1"/>
</dbReference>
<dbReference type="InterPro" id="IPR042296">
    <property type="entry name" value="tRNA_met_Trm1_C"/>
</dbReference>
<dbReference type="NCBIfam" id="TIGR00308">
    <property type="entry name" value="TRM1"/>
    <property type="match status" value="1"/>
</dbReference>
<dbReference type="PANTHER" id="PTHR10631">
    <property type="entry name" value="N 2 ,N 2 -DIMETHYLGUANOSINE TRNA METHYLTRANSFERASE"/>
    <property type="match status" value="1"/>
</dbReference>
<dbReference type="PANTHER" id="PTHR10631:SF3">
    <property type="entry name" value="TRNA (GUANINE(26)-N(2))-DIMETHYLTRANSFERASE"/>
    <property type="match status" value="1"/>
</dbReference>
<dbReference type="Pfam" id="PF02005">
    <property type="entry name" value="TRM"/>
    <property type="match status" value="1"/>
</dbReference>
<dbReference type="SUPFAM" id="SSF53335">
    <property type="entry name" value="S-adenosyl-L-methionine-dependent methyltransferases"/>
    <property type="match status" value="1"/>
</dbReference>
<dbReference type="PROSITE" id="PS51626">
    <property type="entry name" value="SAM_MT_TRM1"/>
    <property type="match status" value="1"/>
</dbReference>
<feature type="transit peptide" description="Mitochondrion" evidence="2">
    <location>
        <begin position="1"/>
        <end status="unknown"/>
    </location>
</feature>
<feature type="chain" id="PRO_0000147677" description="tRNA (guanine(26)-N(2))-dimethyltransferase" evidence="2">
    <location>
        <begin status="unknown"/>
        <end position="548"/>
    </location>
</feature>
<feature type="domain" description="Trm1 methyltransferase" evidence="3">
    <location>
        <begin position="30"/>
        <end position="470"/>
    </location>
</feature>
<feature type="region of interest" description="Disordered" evidence="4">
    <location>
        <begin position="523"/>
        <end position="548"/>
    </location>
</feature>
<feature type="binding site" evidence="1">
    <location>
        <position position="57"/>
    </location>
    <ligand>
        <name>S-adenosyl-L-methionine</name>
        <dbReference type="ChEBI" id="CHEBI:59789"/>
    </ligand>
</feature>
<feature type="binding site" evidence="1">
    <location>
        <position position="137"/>
    </location>
    <ligand>
        <name>S-adenosyl-L-methionine</name>
        <dbReference type="ChEBI" id="CHEBI:59789"/>
    </ligand>
</feature>
<feature type="binding site" evidence="1">
    <location>
        <position position="155"/>
    </location>
    <ligand>
        <name>S-adenosyl-L-methionine</name>
        <dbReference type="ChEBI" id="CHEBI:59789"/>
    </ligand>
</feature>
<feature type="binding site" evidence="1">
    <location>
        <position position="186"/>
    </location>
    <ligand>
        <name>S-adenosyl-L-methionine</name>
        <dbReference type="ChEBI" id="CHEBI:59789"/>
    </ligand>
</feature>
<feature type="binding site" evidence="1">
    <location>
        <position position="317"/>
    </location>
    <ligand>
        <name>Zn(2+)</name>
        <dbReference type="ChEBI" id="CHEBI:29105"/>
    </ligand>
</feature>
<feature type="binding site" evidence="1">
    <location>
        <position position="320"/>
    </location>
    <ligand>
        <name>Zn(2+)</name>
        <dbReference type="ChEBI" id="CHEBI:29105"/>
    </ligand>
</feature>
<feature type="binding site" evidence="1">
    <location>
        <position position="354"/>
    </location>
    <ligand>
        <name>Zn(2+)</name>
        <dbReference type="ChEBI" id="CHEBI:29105"/>
    </ligand>
</feature>
<feature type="binding site" evidence="1">
    <location>
        <position position="357"/>
    </location>
    <ligand>
        <name>Zn(2+)</name>
        <dbReference type="ChEBI" id="CHEBI:29105"/>
    </ligand>
</feature>
<feature type="splice variant" id="VSP_062552" description="In isoform 2.">
    <location>
        <begin position="1"/>
        <end position="23"/>
    </location>
</feature>
<feature type="mutagenesis site" description="Abolished tRNA guanine-dimethyltransferase activity without affecting the ability to promote RNA strand annealing activity." evidence="6">
    <original>D</original>
    <variation>A</variation>
    <location>
        <position position="201"/>
    </location>
</feature>
<feature type="sequence conflict" description="In Ref. 1; CAA11801." evidence="8" ref="1">
    <original>S</original>
    <variation>T</variation>
    <location>
        <position position="322"/>
    </location>
</feature>
<name>TRM1_SCHPO</name>